<protein>
    <recommendedName>
        <fullName evidence="1">Threonine--tRNA ligase</fullName>
        <ecNumber evidence="1">6.1.1.3</ecNumber>
    </recommendedName>
    <alternativeName>
        <fullName evidence="1">Threonyl-tRNA synthetase</fullName>
        <shortName evidence="1">ThrRS</shortName>
    </alternativeName>
</protein>
<comment type="function">
    <text evidence="1">Catalyzes the attachment of threonine to tRNA(Thr) in a two-step reaction: L-threonine is first activated by ATP to form Thr-AMP and then transferred to the acceptor end of tRNA(Thr). Also edits incorrectly charged L-seryl-tRNA(Thr).</text>
</comment>
<comment type="catalytic activity">
    <reaction evidence="1">
        <text>tRNA(Thr) + L-threonine + ATP = L-threonyl-tRNA(Thr) + AMP + diphosphate + H(+)</text>
        <dbReference type="Rhea" id="RHEA:24624"/>
        <dbReference type="Rhea" id="RHEA-COMP:9670"/>
        <dbReference type="Rhea" id="RHEA-COMP:9704"/>
        <dbReference type="ChEBI" id="CHEBI:15378"/>
        <dbReference type="ChEBI" id="CHEBI:30616"/>
        <dbReference type="ChEBI" id="CHEBI:33019"/>
        <dbReference type="ChEBI" id="CHEBI:57926"/>
        <dbReference type="ChEBI" id="CHEBI:78442"/>
        <dbReference type="ChEBI" id="CHEBI:78534"/>
        <dbReference type="ChEBI" id="CHEBI:456215"/>
        <dbReference type="EC" id="6.1.1.3"/>
    </reaction>
</comment>
<comment type="cofactor">
    <cofactor evidence="1">
        <name>Zn(2+)</name>
        <dbReference type="ChEBI" id="CHEBI:29105"/>
    </cofactor>
    <text evidence="1">Binds 1 zinc ion per subunit.</text>
</comment>
<comment type="subunit">
    <text evidence="1">Homodimer.</text>
</comment>
<comment type="subcellular location">
    <subcellularLocation>
        <location evidence="1">Cytoplasm</location>
    </subcellularLocation>
</comment>
<comment type="similarity">
    <text evidence="1">Belongs to the class-II aminoacyl-tRNA synthetase family.</text>
</comment>
<sequence length="638" mass="73253">MPIITLPDGTKKEFSGSITIADIASDIGPGLASAAIAGKVNQDLVDISIPIDYDAEIKIITAKDKEGVEIIRHSFAHLIGHAVKQLYPDAKMAIGPIIEDGFYYDISYSKTFTPEDLARIEERIKDLIKLNYDVVVEIVSRDKALNTFKDRNEPYKVEIINNIPEGETIKLYKHQEYIDMCRGPHVPNTKHLNSFKLMRVSGAYWRGDSDNEMLQRIYGTAWANKKDLKAYINRLEEAEKRDHRKIGKKMDLFHTQEEAPGMVFWHPNGWSIYQVLEKYIRDVLNNNYYQEVKTPQAVDRSLWEKSGHWDKFKDDMFTTTSENREYAIKPMNCPCHIQIFNQGLKSYRDLPIRLAEFGSCHRNEPSGALHGLMRVRNFVQDDAHIFCTEAQVQSEVSNFIDLVFEVYKSFGFNEIIIKLSTRPKKRVGSEFIWDKSEKALSEALNSKGLDWSYLPGEGAFYGPKIEFSLKDCLNRVWQCGTIQVDFSMPSRLEAKYIDEKGEKKEPVMLHRAILGSFERFIGILIENYAGNFPVWLAPVQIIVMGITDRNSSCCESLTTKLINKGYRVKLDLRNEKIGFKIREHTLNRIPYLLIIGDKEEKEGKIAVRTREGNDMGSISLEEFLVILNKSISLKGRFD</sequence>
<evidence type="ECO:0000255" key="1">
    <source>
        <dbReference type="HAMAP-Rule" id="MF_00184"/>
    </source>
</evidence>
<evidence type="ECO:0000255" key="2">
    <source>
        <dbReference type="PROSITE-ProRule" id="PRU01228"/>
    </source>
</evidence>
<reference key="1">
    <citation type="journal article" date="2007" name="PLoS Genet.">
        <title>Patterns and implications of gene gain and loss in the evolution of Prochlorococcus.</title>
        <authorList>
            <person name="Kettler G.C."/>
            <person name="Martiny A.C."/>
            <person name="Huang K."/>
            <person name="Zucker J."/>
            <person name="Coleman M.L."/>
            <person name="Rodrigue S."/>
            <person name="Chen F."/>
            <person name="Lapidus A."/>
            <person name="Ferriera S."/>
            <person name="Johnson J."/>
            <person name="Steglich C."/>
            <person name="Church G.M."/>
            <person name="Richardson P."/>
            <person name="Chisholm S.W."/>
        </authorList>
    </citation>
    <scope>NUCLEOTIDE SEQUENCE [LARGE SCALE GENOMIC DNA]</scope>
    <source>
        <strain>MIT 9211</strain>
    </source>
</reference>
<dbReference type="EC" id="6.1.1.3" evidence="1"/>
<dbReference type="EMBL" id="CP000878">
    <property type="protein sequence ID" value="ABX08984.1"/>
    <property type="molecule type" value="Genomic_DNA"/>
</dbReference>
<dbReference type="RefSeq" id="WP_012195605.1">
    <property type="nucleotide sequence ID" value="NC_009976.1"/>
</dbReference>
<dbReference type="SMR" id="A9BAX2"/>
<dbReference type="STRING" id="93059.P9211_10531"/>
<dbReference type="KEGG" id="pmj:P9211_10531"/>
<dbReference type="eggNOG" id="COG0441">
    <property type="taxonomic scope" value="Bacteria"/>
</dbReference>
<dbReference type="HOGENOM" id="CLU_008554_0_1_3"/>
<dbReference type="OrthoDB" id="9802304at2"/>
<dbReference type="Proteomes" id="UP000000788">
    <property type="component" value="Chromosome"/>
</dbReference>
<dbReference type="GO" id="GO:0005829">
    <property type="term" value="C:cytosol"/>
    <property type="evidence" value="ECO:0007669"/>
    <property type="project" value="TreeGrafter"/>
</dbReference>
<dbReference type="GO" id="GO:0005524">
    <property type="term" value="F:ATP binding"/>
    <property type="evidence" value="ECO:0007669"/>
    <property type="project" value="UniProtKB-UniRule"/>
</dbReference>
<dbReference type="GO" id="GO:0046872">
    <property type="term" value="F:metal ion binding"/>
    <property type="evidence" value="ECO:0007669"/>
    <property type="project" value="UniProtKB-KW"/>
</dbReference>
<dbReference type="GO" id="GO:0004829">
    <property type="term" value="F:threonine-tRNA ligase activity"/>
    <property type="evidence" value="ECO:0007669"/>
    <property type="project" value="UniProtKB-UniRule"/>
</dbReference>
<dbReference type="GO" id="GO:0000049">
    <property type="term" value="F:tRNA binding"/>
    <property type="evidence" value="ECO:0007669"/>
    <property type="project" value="UniProtKB-KW"/>
</dbReference>
<dbReference type="GO" id="GO:0006435">
    <property type="term" value="P:threonyl-tRNA aminoacylation"/>
    <property type="evidence" value="ECO:0007669"/>
    <property type="project" value="UniProtKB-UniRule"/>
</dbReference>
<dbReference type="CDD" id="cd01667">
    <property type="entry name" value="TGS_ThrRS"/>
    <property type="match status" value="1"/>
</dbReference>
<dbReference type="CDD" id="cd00860">
    <property type="entry name" value="ThrRS_anticodon"/>
    <property type="match status" value="1"/>
</dbReference>
<dbReference type="CDD" id="cd00771">
    <property type="entry name" value="ThrRS_core"/>
    <property type="match status" value="1"/>
</dbReference>
<dbReference type="FunFam" id="3.10.20.30:FF:000005">
    <property type="entry name" value="Threonine--tRNA ligase"/>
    <property type="match status" value="1"/>
</dbReference>
<dbReference type="FunFam" id="3.30.54.20:FF:000002">
    <property type="entry name" value="Threonine--tRNA ligase"/>
    <property type="match status" value="1"/>
</dbReference>
<dbReference type="FunFam" id="3.30.930.10:FF:000002">
    <property type="entry name" value="Threonine--tRNA ligase"/>
    <property type="match status" value="1"/>
</dbReference>
<dbReference type="FunFam" id="3.40.50.800:FF:000001">
    <property type="entry name" value="Threonine--tRNA ligase"/>
    <property type="match status" value="1"/>
</dbReference>
<dbReference type="FunFam" id="3.30.980.10:FF:000005">
    <property type="entry name" value="Threonyl-tRNA synthetase, mitochondrial"/>
    <property type="match status" value="1"/>
</dbReference>
<dbReference type="Gene3D" id="3.10.20.30">
    <property type="match status" value="1"/>
</dbReference>
<dbReference type="Gene3D" id="3.30.54.20">
    <property type="match status" value="1"/>
</dbReference>
<dbReference type="Gene3D" id="3.40.50.800">
    <property type="entry name" value="Anticodon-binding domain"/>
    <property type="match status" value="1"/>
</dbReference>
<dbReference type="Gene3D" id="3.30.930.10">
    <property type="entry name" value="Bira Bifunctional Protein, Domain 2"/>
    <property type="match status" value="1"/>
</dbReference>
<dbReference type="Gene3D" id="3.30.980.10">
    <property type="entry name" value="Threonyl-trna Synthetase, Chain A, domain 2"/>
    <property type="match status" value="1"/>
</dbReference>
<dbReference type="HAMAP" id="MF_00184">
    <property type="entry name" value="Thr_tRNA_synth"/>
    <property type="match status" value="1"/>
</dbReference>
<dbReference type="InterPro" id="IPR002314">
    <property type="entry name" value="aa-tRNA-synt_IIb"/>
</dbReference>
<dbReference type="InterPro" id="IPR006195">
    <property type="entry name" value="aa-tRNA-synth_II"/>
</dbReference>
<dbReference type="InterPro" id="IPR045864">
    <property type="entry name" value="aa-tRNA-synth_II/BPL/LPL"/>
</dbReference>
<dbReference type="InterPro" id="IPR004154">
    <property type="entry name" value="Anticodon-bd"/>
</dbReference>
<dbReference type="InterPro" id="IPR036621">
    <property type="entry name" value="Anticodon-bd_dom_sf"/>
</dbReference>
<dbReference type="InterPro" id="IPR012675">
    <property type="entry name" value="Beta-grasp_dom_sf"/>
</dbReference>
<dbReference type="InterPro" id="IPR004095">
    <property type="entry name" value="TGS"/>
</dbReference>
<dbReference type="InterPro" id="IPR012676">
    <property type="entry name" value="TGS-like"/>
</dbReference>
<dbReference type="InterPro" id="IPR002320">
    <property type="entry name" value="Thr-tRNA-ligase_IIa"/>
</dbReference>
<dbReference type="InterPro" id="IPR018163">
    <property type="entry name" value="Thr/Ala-tRNA-synth_IIc_edit"/>
</dbReference>
<dbReference type="InterPro" id="IPR047246">
    <property type="entry name" value="ThrRS_anticodon"/>
</dbReference>
<dbReference type="InterPro" id="IPR033728">
    <property type="entry name" value="ThrRS_core"/>
</dbReference>
<dbReference type="InterPro" id="IPR012947">
    <property type="entry name" value="tRNA_SAD"/>
</dbReference>
<dbReference type="NCBIfam" id="TIGR00418">
    <property type="entry name" value="thrS"/>
    <property type="match status" value="1"/>
</dbReference>
<dbReference type="PANTHER" id="PTHR11451:SF44">
    <property type="entry name" value="THREONINE--TRNA LIGASE, CHLOROPLASTIC_MITOCHONDRIAL 2"/>
    <property type="match status" value="1"/>
</dbReference>
<dbReference type="PANTHER" id="PTHR11451">
    <property type="entry name" value="THREONINE-TRNA LIGASE"/>
    <property type="match status" value="1"/>
</dbReference>
<dbReference type="Pfam" id="PF03129">
    <property type="entry name" value="HGTP_anticodon"/>
    <property type="match status" value="1"/>
</dbReference>
<dbReference type="Pfam" id="PF02824">
    <property type="entry name" value="TGS"/>
    <property type="match status" value="1"/>
</dbReference>
<dbReference type="Pfam" id="PF00587">
    <property type="entry name" value="tRNA-synt_2b"/>
    <property type="match status" value="1"/>
</dbReference>
<dbReference type="Pfam" id="PF07973">
    <property type="entry name" value="tRNA_SAD"/>
    <property type="match status" value="1"/>
</dbReference>
<dbReference type="PRINTS" id="PR01047">
    <property type="entry name" value="TRNASYNTHTHR"/>
</dbReference>
<dbReference type="SMART" id="SM00863">
    <property type="entry name" value="tRNA_SAD"/>
    <property type="match status" value="1"/>
</dbReference>
<dbReference type="SUPFAM" id="SSF52954">
    <property type="entry name" value="Class II aaRS ABD-related"/>
    <property type="match status" value="1"/>
</dbReference>
<dbReference type="SUPFAM" id="SSF55681">
    <property type="entry name" value="Class II aaRS and biotin synthetases"/>
    <property type="match status" value="1"/>
</dbReference>
<dbReference type="SUPFAM" id="SSF81271">
    <property type="entry name" value="TGS-like"/>
    <property type="match status" value="1"/>
</dbReference>
<dbReference type="SUPFAM" id="SSF55186">
    <property type="entry name" value="ThrRS/AlaRS common domain"/>
    <property type="match status" value="1"/>
</dbReference>
<dbReference type="PROSITE" id="PS50862">
    <property type="entry name" value="AA_TRNA_LIGASE_II"/>
    <property type="match status" value="1"/>
</dbReference>
<dbReference type="PROSITE" id="PS51880">
    <property type="entry name" value="TGS"/>
    <property type="match status" value="1"/>
</dbReference>
<feature type="chain" id="PRO_1000098597" description="Threonine--tRNA ligase">
    <location>
        <begin position="1"/>
        <end position="638"/>
    </location>
</feature>
<feature type="domain" description="TGS" evidence="2">
    <location>
        <begin position="1"/>
        <end position="61"/>
    </location>
</feature>
<feature type="region of interest" description="Catalytic" evidence="1">
    <location>
        <begin position="242"/>
        <end position="533"/>
    </location>
</feature>
<feature type="binding site" evidence="1">
    <location>
        <position position="333"/>
    </location>
    <ligand>
        <name>Zn(2+)</name>
        <dbReference type="ChEBI" id="CHEBI:29105"/>
    </ligand>
</feature>
<feature type="binding site" evidence="1">
    <location>
        <position position="384"/>
    </location>
    <ligand>
        <name>Zn(2+)</name>
        <dbReference type="ChEBI" id="CHEBI:29105"/>
    </ligand>
</feature>
<feature type="binding site" evidence="1">
    <location>
        <position position="510"/>
    </location>
    <ligand>
        <name>Zn(2+)</name>
        <dbReference type="ChEBI" id="CHEBI:29105"/>
    </ligand>
</feature>
<organism>
    <name type="scientific">Prochlorococcus marinus (strain MIT 9211)</name>
    <dbReference type="NCBI Taxonomy" id="93059"/>
    <lineage>
        <taxon>Bacteria</taxon>
        <taxon>Bacillati</taxon>
        <taxon>Cyanobacteriota</taxon>
        <taxon>Cyanophyceae</taxon>
        <taxon>Synechococcales</taxon>
        <taxon>Prochlorococcaceae</taxon>
        <taxon>Prochlorococcus</taxon>
    </lineage>
</organism>
<gene>
    <name evidence="1" type="primary">thrS</name>
    <name type="ordered locus">P9211_10531</name>
</gene>
<name>SYT_PROM4</name>
<proteinExistence type="inferred from homology"/>
<keyword id="KW-0030">Aminoacyl-tRNA synthetase</keyword>
<keyword id="KW-0067">ATP-binding</keyword>
<keyword id="KW-0963">Cytoplasm</keyword>
<keyword id="KW-0436">Ligase</keyword>
<keyword id="KW-0479">Metal-binding</keyword>
<keyword id="KW-0547">Nucleotide-binding</keyword>
<keyword id="KW-0648">Protein biosynthesis</keyword>
<keyword id="KW-1185">Reference proteome</keyword>
<keyword id="KW-0694">RNA-binding</keyword>
<keyword id="KW-0820">tRNA-binding</keyword>
<keyword id="KW-0862">Zinc</keyword>
<accession>A9BAX2</accession>